<sequence length="11" mass="1149">GRGGASNYVRL</sequence>
<organism>
    <name type="scientific">Hemilobophasma montaguense</name>
    <name type="common">Gladiator</name>
    <name type="synonym">Heel-walker</name>
    <dbReference type="NCBI Taxonomy" id="253130"/>
    <lineage>
        <taxon>Eukaryota</taxon>
        <taxon>Metazoa</taxon>
        <taxon>Ecdysozoa</taxon>
        <taxon>Arthropoda</taxon>
        <taxon>Hexapoda</taxon>
        <taxon>Insecta</taxon>
        <taxon>Pterygota</taxon>
        <taxon>Neoptera</taxon>
        <taxon>Polyneoptera</taxon>
        <taxon>Mantophasmatodea</taxon>
        <taxon>Austrophasmatidae</taxon>
        <taxon>Hemilobophasma</taxon>
    </lineage>
</organism>
<accession>B3A0C7</accession>
<keyword id="KW-0027">Amidation</keyword>
<keyword id="KW-0903">Direct protein sequencing</keyword>
<keyword id="KW-0527">Neuropeptide</keyword>
<keyword id="KW-0964">Secreted</keyword>
<feature type="peptide" id="PRO_0000421540" description="Extended FMRFamide-9" evidence="3">
    <location>
        <begin position="1"/>
        <end position="11"/>
    </location>
</feature>
<feature type="modified residue" description="Leucine amide" evidence="3">
    <location>
        <position position="11"/>
    </location>
</feature>
<feature type="unsure residue" description="L or I" evidence="3">
    <location>
        <position position="11"/>
    </location>
</feature>
<protein>
    <recommendedName>
        <fullName evidence="4">Extended FMRFamide-9</fullName>
        <shortName evidence="4">FMRFa-9</shortName>
    </recommendedName>
</protein>
<comment type="function">
    <text evidence="1">FMRFamides and FMRFamide-like peptides are neuropeptides.</text>
</comment>
<comment type="subcellular location">
    <subcellularLocation>
        <location evidence="6">Secreted</location>
    </subcellularLocation>
</comment>
<comment type="similarity">
    <text evidence="2">Belongs to the FARP (FMRF amide related peptide) family.</text>
</comment>
<dbReference type="GO" id="GO:0005576">
    <property type="term" value="C:extracellular region"/>
    <property type="evidence" value="ECO:0007669"/>
    <property type="project" value="UniProtKB-SubCell"/>
</dbReference>
<dbReference type="GO" id="GO:0007218">
    <property type="term" value="P:neuropeptide signaling pathway"/>
    <property type="evidence" value="ECO:0007669"/>
    <property type="project" value="UniProtKB-KW"/>
</dbReference>
<reference evidence="5" key="1">
    <citation type="journal article" date="2012" name="Syst. Biol.">
        <title>Peptidomics-based phylogeny and biogeography of Mantophasmatodea (Hexapoda).</title>
        <authorList>
            <person name="Predel R."/>
            <person name="Neupert S."/>
            <person name="Huetteroth W."/>
            <person name="Kahnt J."/>
            <person name="Waidelich D."/>
            <person name="Roth S."/>
        </authorList>
    </citation>
    <scope>PROTEIN SEQUENCE</scope>
    <scope>AMIDATION AT LEU-11</scope>
    <source>
        <tissue evidence="3">Thoracic perisympathetic organs</tissue>
    </source>
</reference>
<proteinExistence type="evidence at protein level"/>
<name>FAR9_HEMMO</name>
<evidence type="ECO:0000250" key="1">
    <source>
        <dbReference type="UniProtKB" id="P34405"/>
    </source>
</evidence>
<evidence type="ECO:0000255" key="2"/>
<evidence type="ECO:0000269" key="3">
    <source>
    </source>
</evidence>
<evidence type="ECO:0000303" key="4">
    <source>
    </source>
</evidence>
<evidence type="ECO:0000305" key="5"/>
<evidence type="ECO:0000305" key="6">
    <source>
    </source>
</evidence>